<accession>Q5LIK3</accession>
<keyword id="KW-0227">DNA damage</keyword>
<keyword id="KW-0233">DNA recombination</keyword>
<keyword id="KW-0234">DNA repair</keyword>
<sequence length="242" mass="28277">MLQKTVGIVLHVLKYNDTSNIVEMYTELSGRASFLVTVPRSKKATVKSVLFQPLALIEFEADYRPNTSLFRIKEAKSFSPFTSIPYDPFKSAIALFLAEFLYRAIREEAENRPLFAYLQHSILWLDTCKISFANFHLVFLMRLSRFLGLYPNLDDYHAGDYFDMLNATFTSVRPQLHSSYIQPDEAGRLLQLMRMNYETMHLFGMNRTERARCLAIINEYYRLHLPDFPILKSLDVLKELFD</sequence>
<proteinExistence type="inferred from homology"/>
<dbReference type="EMBL" id="CR626927">
    <property type="protein sequence ID" value="CAH06023.1"/>
    <property type="molecule type" value="Genomic_DNA"/>
</dbReference>
<dbReference type="RefSeq" id="WP_005783992.1">
    <property type="nucleotide sequence ID" value="NZ_UFTH01000001.1"/>
</dbReference>
<dbReference type="SMR" id="Q5LIK3"/>
<dbReference type="PaxDb" id="272559-BF9343_0244"/>
<dbReference type="GeneID" id="60367759"/>
<dbReference type="KEGG" id="bfs:BF9343_0244"/>
<dbReference type="eggNOG" id="COG1381">
    <property type="taxonomic scope" value="Bacteria"/>
</dbReference>
<dbReference type="HOGENOM" id="CLU_087596_0_0_10"/>
<dbReference type="Proteomes" id="UP000006731">
    <property type="component" value="Chromosome"/>
</dbReference>
<dbReference type="GO" id="GO:0043590">
    <property type="term" value="C:bacterial nucleoid"/>
    <property type="evidence" value="ECO:0007669"/>
    <property type="project" value="TreeGrafter"/>
</dbReference>
<dbReference type="GO" id="GO:0006310">
    <property type="term" value="P:DNA recombination"/>
    <property type="evidence" value="ECO:0007669"/>
    <property type="project" value="UniProtKB-UniRule"/>
</dbReference>
<dbReference type="GO" id="GO:0006302">
    <property type="term" value="P:double-strand break repair"/>
    <property type="evidence" value="ECO:0007669"/>
    <property type="project" value="TreeGrafter"/>
</dbReference>
<dbReference type="Gene3D" id="2.40.50.140">
    <property type="entry name" value="Nucleic acid-binding proteins"/>
    <property type="match status" value="1"/>
</dbReference>
<dbReference type="HAMAP" id="MF_00201">
    <property type="entry name" value="RecO"/>
    <property type="match status" value="1"/>
</dbReference>
<dbReference type="InterPro" id="IPR037278">
    <property type="entry name" value="ARFGAP/RecO"/>
</dbReference>
<dbReference type="InterPro" id="IPR022572">
    <property type="entry name" value="DNA_rep/recomb_RecO_N"/>
</dbReference>
<dbReference type="InterPro" id="IPR012340">
    <property type="entry name" value="NA-bd_OB-fold"/>
</dbReference>
<dbReference type="InterPro" id="IPR003717">
    <property type="entry name" value="RecO"/>
</dbReference>
<dbReference type="NCBIfam" id="TIGR00613">
    <property type="entry name" value="reco"/>
    <property type="match status" value="1"/>
</dbReference>
<dbReference type="PANTHER" id="PTHR33991">
    <property type="entry name" value="DNA REPAIR PROTEIN RECO"/>
    <property type="match status" value="1"/>
</dbReference>
<dbReference type="PANTHER" id="PTHR33991:SF1">
    <property type="entry name" value="DNA REPAIR PROTEIN RECO"/>
    <property type="match status" value="1"/>
</dbReference>
<dbReference type="Pfam" id="PF02565">
    <property type="entry name" value="RecO_C"/>
    <property type="match status" value="1"/>
</dbReference>
<dbReference type="Pfam" id="PF11967">
    <property type="entry name" value="RecO_N"/>
    <property type="match status" value="1"/>
</dbReference>
<dbReference type="SUPFAM" id="SSF57863">
    <property type="entry name" value="ArfGap/RecO-like zinc finger"/>
    <property type="match status" value="1"/>
</dbReference>
<protein>
    <recommendedName>
        <fullName evidence="1">DNA repair protein RecO</fullName>
    </recommendedName>
    <alternativeName>
        <fullName evidence="1">Recombination protein O</fullName>
    </alternativeName>
</protein>
<comment type="function">
    <text evidence="1">Involved in DNA repair and RecF pathway recombination.</text>
</comment>
<comment type="similarity">
    <text evidence="1">Belongs to the RecO family.</text>
</comment>
<organism>
    <name type="scientific">Bacteroides fragilis (strain ATCC 25285 / DSM 2151 / CCUG 4856 / JCM 11019 / LMG 10263 / NCTC 9343 / Onslow / VPI 2553 / EN-2)</name>
    <dbReference type="NCBI Taxonomy" id="272559"/>
    <lineage>
        <taxon>Bacteria</taxon>
        <taxon>Pseudomonadati</taxon>
        <taxon>Bacteroidota</taxon>
        <taxon>Bacteroidia</taxon>
        <taxon>Bacteroidales</taxon>
        <taxon>Bacteroidaceae</taxon>
        <taxon>Bacteroides</taxon>
    </lineage>
</organism>
<evidence type="ECO:0000255" key="1">
    <source>
        <dbReference type="HAMAP-Rule" id="MF_00201"/>
    </source>
</evidence>
<feature type="chain" id="PRO_1000193359" description="DNA repair protein RecO">
    <location>
        <begin position="1"/>
        <end position="242"/>
    </location>
</feature>
<reference key="1">
    <citation type="journal article" date="2005" name="Science">
        <title>Extensive DNA inversions in the B. fragilis genome control variable gene expression.</title>
        <authorList>
            <person name="Cerdeno-Tarraga A.-M."/>
            <person name="Patrick S."/>
            <person name="Crossman L.C."/>
            <person name="Blakely G."/>
            <person name="Abratt V."/>
            <person name="Lennard N."/>
            <person name="Poxton I."/>
            <person name="Duerden B."/>
            <person name="Harris B."/>
            <person name="Quail M.A."/>
            <person name="Barron A."/>
            <person name="Clark L."/>
            <person name="Corton C."/>
            <person name="Doggett J."/>
            <person name="Holden M.T.G."/>
            <person name="Larke N."/>
            <person name="Line A."/>
            <person name="Lord A."/>
            <person name="Norbertczak H."/>
            <person name="Ormond D."/>
            <person name="Price C."/>
            <person name="Rabbinowitsch E."/>
            <person name="Woodward J."/>
            <person name="Barrell B.G."/>
            <person name="Parkhill J."/>
        </authorList>
    </citation>
    <scope>NUCLEOTIDE SEQUENCE [LARGE SCALE GENOMIC DNA]</scope>
    <source>
        <strain>ATCC 25285 / DSM 2151 / CCUG 4856 / JCM 11019 / LMG 10263 / NCTC 9343 / Onslow / VPI 2553 / EN-2</strain>
    </source>
</reference>
<name>RECO_BACFN</name>
<gene>
    <name evidence="1" type="primary">recO</name>
    <name type="ordered locus">BF0248</name>
</gene>